<proteinExistence type="evidence at protein level"/>
<protein>
    <recommendedName>
        <fullName evidence="7">Rabankyrin-5</fullName>
        <shortName>Rank-5</shortName>
    </recommendedName>
    <alternativeName>
        <fullName>Ankyrin repeat and FYVE domain-containing protein 1</fullName>
    </alternativeName>
    <alternativeName>
        <fullName>Ankyrin repeats hooked to a zinc finger motif</fullName>
    </alternativeName>
</protein>
<keyword id="KW-0007">Acetylation</keyword>
<keyword id="KW-0025">Alternative splicing</keyword>
<keyword id="KW-0040">ANK repeat</keyword>
<keyword id="KW-0963">Cytoplasm</keyword>
<keyword id="KW-0968">Cytoplasmic vesicle</keyword>
<keyword id="KW-0254">Endocytosis</keyword>
<keyword id="KW-0967">Endosome</keyword>
<keyword id="KW-0472">Membrane</keyword>
<keyword id="KW-0479">Metal-binding</keyword>
<keyword id="KW-0597">Phosphoprotein</keyword>
<keyword id="KW-1185">Reference proteome</keyword>
<keyword id="KW-0677">Repeat</keyword>
<keyword id="KW-0862">Zinc</keyword>
<keyword id="KW-0863">Zinc-finger</keyword>
<evidence type="ECO:0000250" key="1">
    <source>
        <dbReference type="UniProtKB" id="Q9P2R3"/>
    </source>
</evidence>
<evidence type="ECO:0000255" key="2">
    <source>
        <dbReference type="PROSITE-ProRule" id="PRU00037"/>
    </source>
</evidence>
<evidence type="ECO:0000255" key="3">
    <source>
        <dbReference type="PROSITE-ProRule" id="PRU00091"/>
    </source>
</evidence>
<evidence type="ECO:0000269" key="4">
    <source>
    </source>
</evidence>
<evidence type="ECO:0000269" key="5">
    <source>
    </source>
</evidence>
<evidence type="ECO:0000303" key="6">
    <source>
    </source>
</evidence>
<evidence type="ECO:0000303" key="7">
    <source>
    </source>
</evidence>
<evidence type="ECO:0000303" key="8">
    <source ref="2"/>
</evidence>
<evidence type="ECO:0000305" key="9"/>
<feature type="initiator methionine" description="Removed" evidence="1">
    <location>
        <position position="1"/>
    </location>
</feature>
<feature type="chain" id="PRO_0000066891" description="Rabankyrin-5">
    <location>
        <begin position="2"/>
        <end position="1169"/>
    </location>
</feature>
<feature type="domain" description="BTB" evidence="2">
    <location>
        <begin position="68"/>
        <end position="130"/>
    </location>
</feature>
<feature type="repeat" description="ANK 1">
    <location>
        <begin position="217"/>
        <end position="247"/>
    </location>
</feature>
<feature type="repeat" description="ANK 2">
    <location>
        <begin position="255"/>
        <end position="284"/>
    </location>
</feature>
<feature type="repeat" description="ANK 3">
    <location>
        <begin position="288"/>
        <end position="317"/>
    </location>
</feature>
<feature type="repeat" description="ANK 4">
    <location>
        <begin position="322"/>
        <end position="362"/>
    </location>
</feature>
<feature type="repeat" description="ANK 5">
    <location>
        <begin position="366"/>
        <end position="396"/>
    </location>
</feature>
<feature type="repeat" description="ANK 6">
    <location>
        <begin position="490"/>
        <end position="519"/>
    </location>
</feature>
<feature type="repeat" description="ANK 7">
    <location>
        <begin position="542"/>
        <end position="572"/>
    </location>
</feature>
<feature type="repeat" description="ANK 8">
    <location>
        <begin position="588"/>
        <end position="617"/>
    </location>
</feature>
<feature type="repeat" description="ANK 9">
    <location>
        <begin position="621"/>
        <end position="650"/>
    </location>
</feature>
<feature type="repeat" description="ANK 10">
    <location>
        <begin position="654"/>
        <end position="683"/>
    </location>
</feature>
<feature type="repeat" description="ANK 11">
    <location>
        <begin position="687"/>
        <end position="716"/>
    </location>
</feature>
<feature type="repeat" description="ANK 12">
    <location>
        <begin position="724"/>
        <end position="753"/>
    </location>
</feature>
<feature type="repeat" description="ANK 13">
    <location>
        <begin position="769"/>
        <end position="798"/>
    </location>
</feature>
<feature type="repeat" description="ANK 14">
    <location>
        <begin position="802"/>
        <end position="832"/>
    </location>
</feature>
<feature type="repeat" description="ANK 15">
    <location>
        <begin position="836"/>
        <end position="865"/>
    </location>
</feature>
<feature type="repeat" description="ANK 16">
    <location>
        <begin position="870"/>
        <end position="899"/>
    </location>
</feature>
<feature type="repeat" description="ANK 17">
    <location>
        <begin position="905"/>
        <end position="934"/>
    </location>
</feature>
<feature type="repeat" description="ANK 18">
    <location>
        <begin position="938"/>
        <end position="967"/>
    </location>
</feature>
<feature type="repeat" description="ANK 19">
    <location>
        <begin position="971"/>
        <end position="1001"/>
    </location>
</feature>
<feature type="repeat" description="ANK 20">
    <location>
        <begin position="1005"/>
        <end position="1037"/>
    </location>
</feature>
<feature type="repeat" description="ANK 21">
    <location>
        <begin position="1043"/>
        <end position="1072"/>
    </location>
</feature>
<feature type="zinc finger region" description="FYVE-type" evidence="3">
    <location>
        <begin position="1104"/>
        <end position="1164"/>
    </location>
</feature>
<feature type="region of interest" description="Interaction with RHOD and RAB5A" evidence="1">
    <location>
        <begin position="650"/>
        <end position="759"/>
    </location>
</feature>
<feature type="short sequence motif" description="NPF">
    <location>
        <begin position="421"/>
        <end position="423"/>
    </location>
</feature>
<feature type="binding site" evidence="3">
    <location>
        <position position="1110"/>
    </location>
    <ligand>
        <name>Zn(2+)</name>
        <dbReference type="ChEBI" id="CHEBI:29105"/>
        <label>1</label>
    </ligand>
</feature>
<feature type="binding site" evidence="3">
    <location>
        <position position="1113"/>
    </location>
    <ligand>
        <name>Zn(2+)</name>
        <dbReference type="ChEBI" id="CHEBI:29105"/>
        <label>1</label>
    </ligand>
</feature>
<feature type="binding site" evidence="3">
    <location>
        <position position="1126"/>
    </location>
    <ligand>
        <name>Zn(2+)</name>
        <dbReference type="ChEBI" id="CHEBI:29105"/>
        <label>2</label>
    </ligand>
</feature>
<feature type="binding site" evidence="3">
    <location>
        <position position="1129"/>
    </location>
    <ligand>
        <name>Zn(2+)</name>
        <dbReference type="ChEBI" id="CHEBI:29105"/>
        <label>2</label>
    </ligand>
</feature>
<feature type="binding site" evidence="3">
    <location>
        <position position="1134"/>
    </location>
    <ligand>
        <name>Zn(2+)</name>
        <dbReference type="ChEBI" id="CHEBI:29105"/>
        <label>1</label>
    </ligand>
</feature>
<feature type="binding site" evidence="3">
    <location>
        <position position="1137"/>
    </location>
    <ligand>
        <name>Zn(2+)</name>
        <dbReference type="ChEBI" id="CHEBI:29105"/>
        <label>1</label>
    </ligand>
</feature>
<feature type="binding site" evidence="3">
    <location>
        <position position="1156"/>
    </location>
    <ligand>
        <name>Zn(2+)</name>
        <dbReference type="ChEBI" id="CHEBI:29105"/>
        <label>2</label>
    </ligand>
</feature>
<feature type="binding site" evidence="3">
    <location>
        <position position="1159"/>
    </location>
    <ligand>
        <name>Zn(2+)</name>
        <dbReference type="ChEBI" id="CHEBI:29105"/>
        <label>2</label>
    </ligand>
</feature>
<feature type="modified residue" description="N-acetylalanine" evidence="1">
    <location>
        <position position="2"/>
    </location>
</feature>
<feature type="modified residue" description="Phosphoserine" evidence="1">
    <location>
        <position position="270"/>
    </location>
</feature>
<feature type="splice variant" id="VSP_007917" description="In isoform 2." evidence="6 8">
    <original>LDLELKDHEGSTALWLAVQYITVSSDQSVNPFEDLPVVNGTSFDENSF</original>
    <variation>YVGRPGEMQSGCEGGIIRFRAERSRRQHCTLAGRPVHHCVFRPVCKPL</variation>
    <location>
        <begin position="392"/>
        <end position="439"/>
    </location>
</feature>
<feature type="splice variant" id="VSP_007918" description="In isoform 2." evidence="6 8">
    <location>
        <begin position="440"/>
        <end position="1169"/>
    </location>
</feature>
<feature type="sequence conflict" description="In Ref. 1; BAA24980 and 2; BAC67211/BAC67388/BAC67389." evidence="9" ref="1 2">
    <original>ML</original>
    <variation>IV</variation>
    <location>
        <begin position="117"/>
        <end position="118"/>
    </location>
</feature>
<feature type="sequence conflict" description="In Ref. 2; BAC67211." evidence="9" ref="2">
    <original>F</original>
    <variation>L</variation>
    <location>
        <position position="439"/>
    </location>
</feature>
<feature type="sequence conflict" description="In Ref. 2; BAC67389." evidence="9" ref="2">
    <original>S</original>
    <variation>T</variation>
    <location>
        <position position="448"/>
    </location>
</feature>
<feature type="sequence conflict" description="In Ref. 2; BAC67389." evidence="9" ref="2">
    <original>G</original>
    <variation>V</variation>
    <location>
        <position position="502"/>
    </location>
</feature>
<feature type="sequence conflict" description="In Ref. 2; BAC67211." evidence="9" ref="2">
    <original>PV</original>
    <variation>TL</variation>
    <location>
        <begin position="526"/>
        <end position="527"/>
    </location>
</feature>
<feature type="sequence conflict" description="In Ref. 2; BAC67389." evidence="9" ref="2">
    <original>P</original>
    <variation>T</variation>
    <location>
        <position position="526"/>
    </location>
</feature>
<feature type="sequence conflict" description="In Ref. 2; BAC67389." evidence="9" ref="2">
    <original>P</original>
    <variation>S</variation>
    <location>
        <position position="840"/>
    </location>
</feature>
<comment type="function">
    <text evidence="1 5">Proposed effector of Rab5. Binds to phosphatidylinositol 3-phosphate (PI(3)P). Involved in homotypic early endosome fusion and to a lesser extent in heterotypic fusion of chlathrin-coated vesicles with early endosomes. Required for correct endosomal localization. Involved in the internalization and trafficking of activated tyrosine kinase receptors such as PDGFRB. Regulates the subcellular localization of the retromer complex in a EHD1-dependent manner. Involved in endosome-to-Golgi transport and biosynthetic transport to late endosomes and lysosomes indicative for a regulation of retromer complex-mediated retrograde transport (By similarity). Involved in macropinocytosis; the function is dependent on Rab5-GTP.</text>
</comment>
<comment type="subunit">
    <text evidence="1">Interacts with RAB5A (in GTP-bound form). Interacts with RHOD (independent of GTP-loaded status). Interacts with EHD1. Interacts with VPS26A; the interaction is independent of EHD1 and is indicative for an association with the cargo recognition subcomplex of the retromer complex.</text>
</comment>
<comment type="subcellular location">
    <subcellularLocation>
        <location evidence="4">Cytoplasm</location>
    </subcellularLocation>
    <subcellularLocation>
        <location evidence="4">Endosome membrane</location>
        <topology evidence="4">Peripheral membrane protein</topology>
    </subcellularLocation>
    <subcellularLocation>
        <location evidence="5">Cytoplasmic vesicle</location>
    </subcellularLocation>
    <text evidence="5">Also associated with endosomal membranes. Localizes to macropinosomes. In kidney proximal tubule cells localizes to vesicle-like structures underneath the apical brush border.</text>
</comment>
<comment type="alternative products">
    <event type="alternative splicing"/>
    <isoform>
        <id>Q810B6-1</id>
        <name>1</name>
        <sequence type="displayed"/>
    </isoform>
    <isoform>
        <id>Q810B6-2</id>
        <name>2</name>
        <sequence type="described" ref="VSP_007917 VSP_007918"/>
    </isoform>
</comment>
<comment type="tissue specificity">
    <text evidence="5">Expressed in kidney proximal tubule epithelial cells; at protein level.</text>
</comment>
<name>ANFY1_MOUSE</name>
<sequence length="1169" mass="128653">MAEEEVAKLEKHLMLLRQEYVKLQKKLAETEKRCTLLAAQANKENSNESFISRLLAIVAGLYEQEQYSDLKIKVGDRHISAHKFVLAARSDSWSLANLSSTEEIDLSDANPEVTMTMLRWIYTDELEFREDDVFLTELMKLANRFQLQLLRERCEKGVMSLVNVRNCIRFYQTAEELNASTLMNYCAEIIASHWDDLRKEDFSSLSAQLLYKMIKSKTEYPLHKAIKVEREDVVFLYLIEMDSQLPGKLNETDHNGDLALDLALSRRLESIATTLVSHKADVDMVDKNGWSLLHKGIQRGDLFASTFLIKNGALVNAATAGAQETPLHLVALYSPKKYSADVMSEMAQIAEALLQAGANPNMQDSKGRTPLHLSIMARNDCVFSQLLQCKQLDLELKDHEGSTALWLAVQYITVSSDQSVNPFEDLPVVNGTSFDENSFAARLIQRGSNTDAPDVMTGNCLLQRAAGAGNEAAALFLATSGAHANHRNKWGETPLHTACRHGLANLTAELLQQGANPNLQTEEALPVPKESPVLMSSADSIYLQTPLHMAIAYNHPDVVSVILEQKANALHATNNLQIIPDFSLKDSRDQTVLGLALWTGMHTIAAQLLGSGASINDTMSDGQTLLHMAIQRQDSKSALFLLEHQADINVRTQDGETALQLAIKHQLPLVVDAICTRGADMSVPDEKGNPPLWLALASNLEDIASTLVRHGCDATCWGPGPSGCLQTLLHRAVDENNESTACFLIRSGCDVNSPRQPGTNGEGEEEARDGQTPLHLAASWGLEETVQCLLEFGANVNAQDAEGRTPVHVAISNQHSVIIQLLISHPNIELSVRDRQGLTPFACAMTYKNNKAAEAILKRESGAAEQVDNKGRNFLHVAVQNSDIESVLFLISVQANVNSRVQDASKLTPLHLAVQAGSEIIVRNLLLAGAKVNELTKHRQTALHLAAQQDLPTICSVLLENGVDFAAVDENGNNALHLAVMHGRLNNIRALLTECTVDAEAFNLRGQSPLHILGQYGKENAAAIFDLFLECMPEYPLDKPDAEGNTVLLLAYMKGNANLCRAIVRSGVRLGVNNNQGVNIFNYQVATKQLLFRLLDMLSKEPPWCDGSNCYECTAKFGVTTRKHHCRHCGRLLCHKCSTKEIPIIKFDLNKPVRVCNICFDVLTLGGVS</sequence>
<reference key="1">
    <citation type="journal article" date="1999" name="Biochem. Biophys. Res. Commun.">
        <title>Molecular cloning of a novel 130-kDa cytoplasmic protein, Ankhzn, containing ankyrin repeats hooked to a zinc finger motif.</title>
        <authorList>
            <person name="Ito K."/>
            <person name="Ishii N."/>
            <person name="Miyashita A."/>
            <person name="Tominaga K."/>
            <person name="Kuriyama H."/>
            <person name="Maruyama H."/>
            <person name="Shirai M."/>
            <person name="Naito M."/>
            <person name="Arakawa M."/>
            <person name="Kuwano R."/>
        </authorList>
    </citation>
    <scope>NUCLEOTIDE SEQUENCE [MRNA] (ISOFORM 2)</scope>
    <scope>SUBCELLULAR LOCATION</scope>
</reference>
<reference key="2">
    <citation type="submission" date="2002-12" db="EMBL/GenBank/DDBJ databases">
        <title>Genomic organization, alternative splicing, and promoter assay of the mouse Ankhzn gene.</title>
        <authorList>
            <person name="Maruyama H."/>
            <person name="Kuriyama H."/>
            <person name="Ishii N."/>
            <person name="Ito K."/>
            <person name="Odani S."/>
            <person name="Kuwano R."/>
        </authorList>
    </citation>
    <scope>NUCLEOTIDE SEQUENCE [GENOMIC DNA / MRNA] (ISOFORMS 1 AND 2)</scope>
    <scope>SEQUENCE REVISION</scope>
</reference>
<reference key="3">
    <citation type="journal article" date="2009" name="PLoS Biol.">
        <title>Lineage-specific biology revealed by a finished genome assembly of the mouse.</title>
        <authorList>
            <person name="Church D.M."/>
            <person name="Goodstadt L."/>
            <person name="Hillier L.W."/>
            <person name="Zody M.C."/>
            <person name="Goldstein S."/>
            <person name="She X."/>
            <person name="Bult C.J."/>
            <person name="Agarwala R."/>
            <person name="Cherry J.L."/>
            <person name="DiCuccio M."/>
            <person name="Hlavina W."/>
            <person name="Kapustin Y."/>
            <person name="Meric P."/>
            <person name="Maglott D."/>
            <person name="Birtle Z."/>
            <person name="Marques A.C."/>
            <person name="Graves T."/>
            <person name="Zhou S."/>
            <person name="Teague B."/>
            <person name="Potamousis K."/>
            <person name="Churas C."/>
            <person name="Place M."/>
            <person name="Herschleb J."/>
            <person name="Runnheim R."/>
            <person name="Forrest D."/>
            <person name="Amos-Landgraf J."/>
            <person name="Schwartz D.C."/>
            <person name="Cheng Z."/>
            <person name="Lindblad-Toh K."/>
            <person name="Eichler E.E."/>
            <person name="Ponting C.P."/>
        </authorList>
    </citation>
    <scope>NUCLEOTIDE SEQUENCE [LARGE SCALE GENOMIC DNA]</scope>
    <source>
        <strain>C57BL/6J</strain>
    </source>
</reference>
<reference key="4">
    <citation type="journal article" date="2004" name="Genome Res.">
        <title>The status, quality, and expansion of the NIH full-length cDNA project: the Mammalian Gene Collection (MGC).</title>
        <authorList>
            <consortium name="The MGC Project Team"/>
        </authorList>
    </citation>
    <scope>NUCLEOTIDE SEQUENCE [LARGE SCALE MRNA] (ISOFORM 1)</scope>
</reference>
<reference key="5">
    <citation type="journal article" date="2003" name="DNA Res.">
        <title>Prediction of the coding sequences of mouse homologues of KIAA gene: II. The complete nucleotide sequences of 400 mouse KIAA-homologous cDNAs identified by screening of terminal sequences of cDNA clones randomly sampled from size-fractionated libraries.</title>
        <authorList>
            <person name="Okazaki N."/>
            <person name="Kikuno R."/>
            <person name="Ohara R."/>
            <person name="Inamoto S."/>
            <person name="Aizawa H."/>
            <person name="Yuasa S."/>
            <person name="Nakajima D."/>
            <person name="Nagase T."/>
            <person name="Ohara O."/>
            <person name="Koga H."/>
        </authorList>
    </citation>
    <scope>NUCLEOTIDE SEQUENCE [LARGE SCALE MRNA] OF 994-1169 (ISOFORM 1)</scope>
    <source>
        <tissue>Brain</tissue>
    </source>
</reference>
<reference key="6">
    <citation type="journal article" date="2004" name="PLoS Biol.">
        <title>The Rab5 effector Rabankyrin-5 regulates and coordinates different endocytic mechanisms.</title>
        <authorList>
            <person name="Schnatwinkel C."/>
            <person name="Christoforidis S."/>
            <person name="Lindsay M.R."/>
            <person name="Uttenweiler-Joseph S."/>
            <person name="Wilm M."/>
            <person name="Parton R.G."/>
            <person name="Zerial M."/>
        </authorList>
    </citation>
    <scope>FUNCTION</scope>
    <scope>SUBCELLULAR LOCATION</scope>
</reference>
<reference key="7">
    <citation type="journal article" date="2010" name="Cell">
        <title>A tissue-specific atlas of mouse protein phosphorylation and expression.</title>
        <authorList>
            <person name="Huttlin E.L."/>
            <person name="Jedrychowski M.P."/>
            <person name="Elias J.E."/>
            <person name="Goswami T."/>
            <person name="Rad R."/>
            <person name="Beausoleil S.A."/>
            <person name="Villen J."/>
            <person name="Haas W."/>
            <person name="Sowa M.E."/>
            <person name="Gygi S.P."/>
        </authorList>
    </citation>
    <scope>IDENTIFICATION BY MASS SPECTROMETRY [LARGE SCALE ANALYSIS]</scope>
    <source>
        <tissue>Brain</tissue>
        <tissue>Brown adipose tissue</tissue>
        <tissue>Heart</tissue>
        <tissue>Kidney</tissue>
        <tissue>Liver</tissue>
        <tissue>Lung</tissue>
        <tissue>Pancreas</tissue>
        <tissue>Spleen</tissue>
        <tissue>Testis</tissue>
    </source>
</reference>
<gene>
    <name type="primary">Ankfy1</name>
    <name type="synonym">Ankhzn</name>
    <name type="synonym">Kiaa1255</name>
</gene>
<organism>
    <name type="scientific">Mus musculus</name>
    <name type="common">Mouse</name>
    <dbReference type="NCBI Taxonomy" id="10090"/>
    <lineage>
        <taxon>Eukaryota</taxon>
        <taxon>Metazoa</taxon>
        <taxon>Chordata</taxon>
        <taxon>Craniata</taxon>
        <taxon>Vertebrata</taxon>
        <taxon>Euteleostomi</taxon>
        <taxon>Mammalia</taxon>
        <taxon>Eutheria</taxon>
        <taxon>Euarchontoglires</taxon>
        <taxon>Glires</taxon>
        <taxon>Rodentia</taxon>
        <taxon>Myomorpha</taxon>
        <taxon>Muroidea</taxon>
        <taxon>Muridae</taxon>
        <taxon>Murinae</taxon>
        <taxon>Mus</taxon>
        <taxon>Mus</taxon>
    </lineage>
</organism>
<accession>Q810B6</accession>
<accession>B1ATS3</accession>
<accession>O54807</accession>
<accession>Q80TG6</accession>
<accession>Q80UH8</accession>
<dbReference type="EMBL" id="AB011370">
    <property type="protein sequence ID" value="BAA24980.2"/>
    <property type="molecule type" value="mRNA"/>
</dbReference>
<dbReference type="EMBL" id="AB098329">
    <property type="protein sequence ID" value="BAC67211.1"/>
    <property type="molecule type" value="mRNA"/>
</dbReference>
<dbReference type="EMBL" id="AB098157">
    <property type="protein sequence ID" value="BAC67389.1"/>
    <property type="molecule type" value="Genomic_DNA"/>
</dbReference>
<dbReference type="EMBL" id="AB098157">
    <property type="protein sequence ID" value="BAC67388.1"/>
    <property type="molecule type" value="Genomic_DNA"/>
</dbReference>
<dbReference type="EMBL" id="AL663082">
    <property type="status" value="NOT_ANNOTATED_CDS"/>
    <property type="molecule type" value="Genomic_DNA"/>
</dbReference>
<dbReference type="EMBL" id="AL808023">
    <property type="status" value="NOT_ANNOTATED_CDS"/>
    <property type="molecule type" value="Genomic_DNA"/>
</dbReference>
<dbReference type="EMBL" id="BC139231">
    <property type="protein sequence ID" value="AAI39232.1"/>
    <property type="molecule type" value="mRNA"/>
</dbReference>
<dbReference type="EMBL" id="AK122479">
    <property type="protein sequence ID" value="BAC65761.1"/>
    <property type="molecule type" value="mRNA"/>
</dbReference>
<dbReference type="CCDS" id="CCDS24989.1">
    <molecule id="Q810B6-1"/>
</dbReference>
<dbReference type="PIR" id="T00253">
    <property type="entry name" value="T00253"/>
</dbReference>
<dbReference type="RefSeq" id="NP_033801.4">
    <molecule id="Q810B6-1"/>
    <property type="nucleotide sequence ID" value="NM_009671.5"/>
</dbReference>
<dbReference type="SMR" id="Q810B6"/>
<dbReference type="BioGRID" id="198103">
    <property type="interactions" value="35"/>
</dbReference>
<dbReference type="FunCoup" id="Q810B6">
    <property type="interactions" value="5050"/>
</dbReference>
<dbReference type="IntAct" id="Q810B6">
    <property type="interactions" value="7"/>
</dbReference>
<dbReference type="MINT" id="Q810B6"/>
<dbReference type="STRING" id="10090.ENSMUSP00000118751"/>
<dbReference type="GlyGen" id="Q810B6">
    <property type="glycosylation" value="2 sites, 2 N-linked glycans (2 sites)"/>
</dbReference>
<dbReference type="iPTMnet" id="Q810B6"/>
<dbReference type="PhosphoSitePlus" id="Q810B6"/>
<dbReference type="SwissPalm" id="Q810B6"/>
<dbReference type="jPOST" id="Q810B6"/>
<dbReference type="PaxDb" id="10090-ENSMUSP00000118751"/>
<dbReference type="PeptideAtlas" id="Q810B6"/>
<dbReference type="ProteomicsDB" id="296229">
    <molecule id="Q810B6-1"/>
</dbReference>
<dbReference type="ProteomicsDB" id="296230">
    <molecule id="Q810B6-2"/>
</dbReference>
<dbReference type="Pumba" id="Q810B6"/>
<dbReference type="Antibodypedia" id="5541">
    <property type="antibodies" value="92 antibodies from 19 providers"/>
</dbReference>
<dbReference type="DNASU" id="11736"/>
<dbReference type="Ensembl" id="ENSMUST00000127610.8">
    <molecule id="Q810B6-2"/>
    <property type="protein sequence ID" value="ENSMUSP00000118252.2"/>
    <property type="gene ID" value="ENSMUSG00000020790.15"/>
</dbReference>
<dbReference type="Ensembl" id="ENSMUST00000155998.2">
    <molecule id="Q810B6-1"/>
    <property type="protein sequence ID" value="ENSMUSP00000118751.2"/>
    <property type="gene ID" value="ENSMUSG00000020790.15"/>
</dbReference>
<dbReference type="GeneID" id="11736"/>
<dbReference type="KEGG" id="mmu:11736"/>
<dbReference type="UCSC" id="uc007jzh.1">
    <molecule id="Q810B6-1"/>
    <property type="organism name" value="mouse"/>
</dbReference>
<dbReference type="AGR" id="MGI:1337008"/>
<dbReference type="CTD" id="51479"/>
<dbReference type="MGI" id="MGI:1337008">
    <property type="gene designation" value="Ankfy1"/>
</dbReference>
<dbReference type="VEuPathDB" id="HostDB:ENSMUSG00000020790"/>
<dbReference type="eggNOG" id="KOG0504">
    <property type="taxonomic scope" value="Eukaryota"/>
</dbReference>
<dbReference type="eggNOG" id="KOG4591">
    <property type="taxonomic scope" value="Eukaryota"/>
</dbReference>
<dbReference type="GeneTree" id="ENSGT00940000156179"/>
<dbReference type="HOGENOM" id="CLU_599335_0_0_1"/>
<dbReference type="InParanoid" id="Q810B6"/>
<dbReference type="OMA" id="WGLEQVV"/>
<dbReference type="OrthoDB" id="2306477at2759"/>
<dbReference type="PhylomeDB" id="Q810B6"/>
<dbReference type="TreeFam" id="TF351263"/>
<dbReference type="Reactome" id="R-MMU-9013405">
    <property type="pathway name" value="RHOD GTPase cycle"/>
</dbReference>
<dbReference type="BioGRID-ORCS" id="11736">
    <property type="hits" value="13 hits in 78 CRISPR screens"/>
</dbReference>
<dbReference type="ChiTaRS" id="Ankfy1">
    <property type="organism name" value="mouse"/>
</dbReference>
<dbReference type="PRO" id="PR:Q810B6"/>
<dbReference type="Proteomes" id="UP000000589">
    <property type="component" value="Chromosome 11"/>
</dbReference>
<dbReference type="RNAct" id="Q810B6">
    <property type="molecule type" value="protein"/>
</dbReference>
<dbReference type="Bgee" id="ENSMUSG00000020790">
    <property type="expression patterns" value="Expressed in stroma of bone marrow and 268 other cell types or tissues"/>
</dbReference>
<dbReference type="GO" id="GO:0005829">
    <property type="term" value="C:cytosol"/>
    <property type="evidence" value="ECO:0007669"/>
    <property type="project" value="GOC"/>
</dbReference>
<dbReference type="GO" id="GO:0005769">
    <property type="term" value="C:early endosome"/>
    <property type="evidence" value="ECO:0007669"/>
    <property type="project" value="Ensembl"/>
</dbReference>
<dbReference type="GO" id="GO:0010008">
    <property type="term" value="C:endosome membrane"/>
    <property type="evidence" value="ECO:0000314"/>
    <property type="project" value="UniProtKB"/>
</dbReference>
<dbReference type="GO" id="GO:0044354">
    <property type="term" value="C:macropinosome"/>
    <property type="evidence" value="ECO:0007669"/>
    <property type="project" value="Ensembl"/>
</dbReference>
<dbReference type="GO" id="GO:0030904">
    <property type="term" value="C:retromer complex"/>
    <property type="evidence" value="ECO:0007669"/>
    <property type="project" value="Ensembl"/>
</dbReference>
<dbReference type="GO" id="GO:1901981">
    <property type="term" value="F:phosphatidylinositol phosphate binding"/>
    <property type="evidence" value="ECO:0007669"/>
    <property type="project" value="Ensembl"/>
</dbReference>
<dbReference type="GO" id="GO:0031267">
    <property type="term" value="F:small GTPase binding"/>
    <property type="evidence" value="ECO:0007669"/>
    <property type="project" value="Ensembl"/>
</dbReference>
<dbReference type="GO" id="GO:0008270">
    <property type="term" value="F:zinc ion binding"/>
    <property type="evidence" value="ECO:0007669"/>
    <property type="project" value="UniProtKB-KW"/>
</dbReference>
<dbReference type="GO" id="GO:0006897">
    <property type="term" value="P:endocytosis"/>
    <property type="evidence" value="ECO:0000303"/>
    <property type="project" value="UniProtKB"/>
</dbReference>
<dbReference type="GO" id="GO:0034058">
    <property type="term" value="P:endosomal vesicle fusion"/>
    <property type="evidence" value="ECO:0007669"/>
    <property type="project" value="Ensembl"/>
</dbReference>
<dbReference type="GO" id="GO:0090160">
    <property type="term" value="P:Golgi to lysosome transport"/>
    <property type="evidence" value="ECO:0007669"/>
    <property type="project" value="Ensembl"/>
</dbReference>
<dbReference type="GO" id="GO:0048549">
    <property type="term" value="P:positive regulation of pinocytosis"/>
    <property type="evidence" value="ECO:0007669"/>
    <property type="project" value="Ensembl"/>
</dbReference>
<dbReference type="GO" id="GO:0042147">
    <property type="term" value="P:retrograde transport, endosome to Golgi"/>
    <property type="evidence" value="ECO:0007669"/>
    <property type="project" value="Ensembl"/>
</dbReference>
<dbReference type="CDD" id="cd18501">
    <property type="entry name" value="BACK_ANKFY1_Rank5"/>
    <property type="match status" value="1"/>
</dbReference>
<dbReference type="CDD" id="cd18303">
    <property type="entry name" value="BTB_POZ_Rank-5"/>
    <property type="match status" value="1"/>
</dbReference>
<dbReference type="CDD" id="cd15728">
    <property type="entry name" value="FYVE_ANFY1"/>
    <property type="match status" value="1"/>
</dbReference>
<dbReference type="FunFam" id="1.25.40.20:FF:000116">
    <property type="entry name" value="Ankyrin repeat and FYVE domain containing 1"/>
    <property type="match status" value="1"/>
</dbReference>
<dbReference type="FunFam" id="1.25.40.20:FF:000142">
    <property type="entry name" value="Ankyrin repeat and FYVE domain containing 1"/>
    <property type="match status" value="1"/>
</dbReference>
<dbReference type="FunFam" id="1.25.40.20:FF:000184">
    <property type="entry name" value="Ankyrin repeat and FYVE domain containing 1"/>
    <property type="match status" value="1"/>
</dbReference>
<dbReference type="FunFam" id="1.25.40.20:FF:000210">
    <property type="entry name" value="Ankyrin repeat and FYVE domain containing 1"/>
    <property type="match status" value="1"/>
</dbReference>
<dbReference type="FunFam" id="3.30.40.10:FF:000104">
    <property type="entry name" value="Ankyrin repeat and FYVE domain-containing 1"/>
    <property type="match status" value="1"/>
</dbReference>
<dbReference type="FunFam" id="3.30.710.10:FF:000086">
    <property type="entry name" value="Ankyrin repeat and FYVE domain-containing 1"/>
    <property type="match status" value="1"/>
</dbReference>
<dbReference type="FunFam" id="1.25.40.20:FF:000166">
    <property type="entry name" value="rabankyrin-5 isoform X1"/>
    <property type="match status" value="1"/>
</dbReference>
<dbReference type="Gene3D" id="1.25.40.20">
    <property type="entry name" value="Ankyrin repeat-containing domain"/>
    <property type="match status" value="5"/>
</dbReference>
<dbReference type="Gene3D" id="3.30.710.10">
    <property type="entry name" value="Potassium Channel Kv1.1, Chain A"/>
    <property type="match status" value="1"/>
</dbReference>
<dbReference type="Gene3D" id="3.30.40.10">
    <property type="entry name" value="Zinc/RING finger domain, C3HC4 (zinc finger)"/>
    <property type="match status" value="1"/>
</dbReference>
<dbReference type="InterPro" id="IPR049765">
    <property type="entry name" value="ANFY1_BTB_POZ"/>
</dbReference>
<dbReference type="InterPro" id="IPR049764">
    <property type="entry name" value="ANFY1_FYVE"/>
</dbReference>
<dbReference type="InterPro" id="IPR049763">
    <property type="entry name" value="ANKFY1_BACK"/>
</dbReference>
<dbReference type="InterPro" id="IPR002110">
    <property type="entry name" value="Ankyrin_rpt"/>
</dbReference>
<dbReference type="InterPro" id="IPR036770">
    <property type="entry name" value="Ankyrin_rpt-contain_sf"/>
</dbReference>
<dbReference type="InterPro" id="IPR000210">
    <property type="entry name" value="BTB/POZ_dom"/>
</dbReference>
<dbReference type="InterPro" id="IPR011333">
    <property type="entry name" value="SKP1/BTB/POZ_sf"/>
</dbReference>
<dbReference type="InterPro" id="IPR000306">
    <property type="entry name" value="Znf_FYVE"/>
</dbReference>
<dbReference type="InterPro" id="IPR017455">
    <property type="entry name" value="Znf_FYVE-rel"/>
</dbReference>
<dbReference type="InterPro" id="IPR011011">
    <property type="entry name" value="Znf_FYVE_PHD"/>
</dbReference>
<dbReference type="InterPro" id="IPR013083">
    <property type="entry name" value="Znf_RING/FYVE/PHD"/>
</dbReference>
<dbReference type="PANTHER" id="PTHR24198">
    <property type="entry name" value="ANKYRIN REPEAT AND PROTEIN KINASE DOMAIN-CONTAINING PROTEIN"/>
    <property type="match status" value="1"/>
</dbReference>
<dbReference type="PANTHER" id="PTHR24198:SF191">
    <property type="entry name" value="RABANKYRIN-5-LIKE"/>
    <property type="match status" value="1"/>
</dbReference>
<dbReference type="Pfam" id="PF00023">
    <property type="entry name" value="Ank"/>
    <property type="match status" value="1"/>
</dbReference>
<dbReference type="Pfam" id="PF12796">
    <property type="entry name" value="Ank_2"/>
    <property type="match status" value="5"/>
</dbReference>
<dbReference type="Pfam" id="PF00651">
    <property type="entry name" value="BTB"/>
    <property type="match status" value="1"/>
</dbReference>
<dbReference type="Pfam" id="PF01363">
    <property type="entry name" value="FYVE"/>
    <property type="match status" value="1"/>
</dbReference>
<dbReference type="PRINTS" id="PR01415">
    <property type="entry name" value="ANKYRIN"/>
</dbReference>
<dbReference type="SMART" id="SM00248">
    <property type="entry name" value="ANK"/>
    <property type="match status" value="20"/>
</dbReference>
<dbReference type="SMART" id="SM00225">
    <property type="entry name" value="BTB"/>
    <property type="match status" value="1"/>
</dbReference>
<dbReference type="SMART" id="SM00064">
    <property type="entry name" value="FYVE"/>
    <property type="match status" value="1"/>
</dbReference>
<dbReference type="SUPFAM" id="SSF48403">
    <property type="entry name" value="Ankyrin repeat"/>
    <property type="match status" value="3"/>
</dbReference>
<dbReference type="SUPFAM" id="SSF57903">
    <property type="entry name" value="FYVE/PHD zinc finger"/>
    <property type="match status" value="1"/>
</dbReference>
<dbReference type="SUPFAM" id="SSF54695">
    <property type="entry name" value="POZ domain"/>
    <property type="match status" value="1"/>
</dbReference>
<dbReference type="PROSITE" id="PS50297">
    <property type="entry name" value="ANK_REP_REGION"/>
    <property type="match status" value="1"/>
</dbReference>
<dbReference type="PROSITE" id="PS50088">
    <property type="entry name" value="ANK_REPEAT"/>
    <property type="match status" value="11"/>
</dbReference>
<dbReference type="PROSITE" id="PS50097">
    <property type="entry name" value="BTB"/>
    <property type="match status" value="1"/>
</dbReference>
<dbReference type="PROSITE" id="PS50178">
    <property type="entry name" value="ZF_FYVE"/>
    <property type="match status" value="1"/>
</dbReference>